<reference key="1">
    <citation type="submission" date="2008-05" db="EMBL/GenBank/DDBJ databases">
        <title>Genome sequence of Helicobacter pylori from the remote Amazon: traces of Asian ancestry of the first Americans.</title>
        <authorList>
            <person name="Kersulyte D."/>
            <person name="Kalia A."/>
            <person name="Gilman R.H."/>
            <person name="Berg D.E."/>
        </authorList>
    </citation>
    <scope>NUCLEOTIDE SEQUENCE [LARGE SCALE GENOMIC DNA]</scope>
    <source>
        <strain>Shi470</strain>
    </source>
</reference>
<keyword id="KW-0004">4Fe-4S</keyword>
<keyword id="KW-0408">Iron</keyword>
<keyword id="KW-0411">Iron-sulfur</keyword>
<keyword id="KW-0414">Isoprene biosynthesis</keyword>
<keyword id="KW-0479">Metal-binding</keyword>
<keyword id="KW-0560">Oxidoreductase</keyword>
<gene>
    <name evidence="1" type="primary">ispG</name>
    <name type="ordered locus">HPSH_03735</name>
</gene>
<feature type="chain" id="PRO_1000097165" description="4-hydroxy-3-methylbut-2-en-1-yl diphosphate synthase (flavodoxin)">
    <location>
        <begin position="1"/>
        <end position="359"/>
    </location>
</feature>
<feature type="binding site" evidence="1">
    <location>
        <position position="264"/>
    </location>
    <ligand>
        <name>[4Fe-4S] cluster</name>
        <dbReference type="ChEBI" id="CHEBI:49883"/>
    </ligand>
</feature>
<feature type="binding site" evidence="1">
    <location>
        <position position="267"/>
    </location>
    <ligand>
        <name>[4Fe-4S] cluster</name>
        <dbReference type="ChEBI" id="CHEBI:49883"/>
    </ligand>
</feature>
<feature type="binding site" evidence="1">
    <location>
        <position position="299"/>
    </location>
    <ligand>
        <name>[4Fe-4S] cluster</name>
        <dbReference type="ChEBI" id="CHEBI:49883"/>
    </ligand>
</feature>
<feature type="binding site" evidence="1">
    <location>
        <position position="306"/>
    </location>
    <ligand>
        <name>[4Fe-4S] cluster</name>
        <dbReference type="ChEBI" id="CHEBI:49883"/>
    </ligand>
</feature>
<evidence type="ECO:0000255" key="1">
    <source>
        <dbReference type="HAMAP-Rule" id="MF_00159"/>
    </source>
</evidence>
<protein>
    <recommendedName>
        <fullName evidence="1">4-hydroxy-3-methylbut-2-en-1-yl diphosphate synthase (flavodoxin)</fullName>
        <ecNumber evidence="1">1.17.7.3</ecNumber>
    </recommendedName>
    <alternativeName>
        <fullName evidence="1">1-hydroxy-2-methyl-2-(E)-butenyl 4-diphosphate synthase</fullName>
    </alternativeName>
</protein>
<accession>B2UTK0</accession>
<name>ISPG_HELPS</name>
<dbReference type="EC" id="1.17.7.3" evidence="1"/>
<dbReference type="EMBL" id="CP001072">
    <property type="protein sequence ID" value="ACD48182.1"/>
    <property type="molecule type" value="Genomic_DNA"/>
</dbReference>
<dbReference type="RefSeq" id="WP_000892507.1">
    <property type="nucleotide sequence ID" value="NC_010698.2"/>
</dbReference>
<dbReference type="SMR" id="B2UTK0"/>
<dbReference type="KEGG" id="hps:HPSH_03735"/>
<dbReference type="HOGENOM" id="CLU_042258_0_0_7"/>
<dbReference type="UniPathway" id="UPA00056">
    <property type="reaction ID" value="UER00096"/>
</dbReference>
<dbReference type="GO" id="GO:0051539">
    <property type="term" value="F:4 iron, 4 sulfur cluster binding"/>
    <property type="evidence" value="ECO:0007669"/>
    <property type="project" value="UniProtKB-UniRule"/>
</dbReference>
<dbReference type="GO" id="GO:0046429">
    <property type="term" value="F:4-hydroxy-3-methylbut-2-en-1-yl diphosphate synthase activity (ferredoxin)"/>
    <property type="evidence" value="ECO:0007669"/>
    <property type="project" value="UniProtKB-UniRule"/>
</dbReference>
<dbReference type="GO" id="GO:0141197">
    <property type="term" value="F:4-hydroxy-3-methylbut-2-enyl-diphosphate synthase activity (flavodoxin)"/>
    <property type="evidence" value="ECO:0007669"/>
    <property type="project" value="UniProtKB-EC"/>
</dbReference>
<dbReference type="GO" id="GO:0005506">
    <property type="term" value="F:iron ion binding"/>
    <property type="evidence" value="ECO:0007669"/>
    <property type="project" value="InterPro"/>
</dbReference>
<dbReference type="GO" id="GO:0019288">
    <property type="term" value="P:isopentenyl diphosphate biosynthetic process, methylerythritol 4-phosphate pathway"/>
    <property type="evidence" value="ECO:0007669"/>
    <property type="project" value="UniProtKB-UniRule"/>
</dbReference>
<dbReference type="GO" id="GO:0016114">
    <property type="term" value="P:terpenoid biosynthetic process"/>
    <property type="evidence" value="ECO:0007669"/>
    <property type="project" value="InterPro"/>
</dbReference>
<dbReference type="FunFam" id="3.20.20.20:FF:000001">
    <property type="entry name" value="4-hydroxy-3-methylbut-2-en-1-yl diphosphate synthase (flavodoxin)"/>
    <property type="match status" value="1"/>
</dbReference>
<dbReference type="FunFam" id="3.30.413.10:FF:000015">
    <property type="entry name" value="4-hydroxy-3-methylbut-2-en-1-yl diphosphate synthase (flavodoxin)"/>
    <property type="match status" value="1"/>
</dbReference>
<dbReference type="Gene3D" id="3.20.20.20">
    <property type="entry name" value="Dihydropteroate synthase-like"/>
    <property type="match status" value="1"/>
</dbReference>
<dbReference type="Gene3D" id="3.30.413.10">
    <property type="entry name" value="Sulfite Reductase Hemoprotein, domain 1"/>
    <property type="match status" value="1"/>
</dbReference>
<dbReference type="HAMAP" id="MF_00159">
    <property type="entry name" value="IspG"/>
    <property type="match status" value="1"/>
</dbReference>
<dbReference type="InterPro" id="IPR011005">
    <property type="entry name" value="Dihydropteroate_synth-like_sf"/>
</dbReference>
<dbReference type="InterPro" id="IPR036849">
    <property type="entry name" value="Enolase-like_C_sf"/>
</dbReference>
<dbReference type="InterPro" id="IPR016425">
    <property type="entry name" value="IspG_bac"/>
</dbReference>
<dbReference type="InterPro" id="IPR004588">
    <property type="entry name" value="IspG_bac-typ"/>
</dbReference>
<dbReference type="InterPro" id="IPR045854">
    <property type="entry name" value="NO2/SO3_Rdtase_4Fe4S_sf"/>
</dbReference>
<dbReference type="NCBIfam" id="TIGR00612">
    <property type="entry name" value="ispG_gcpE"/>
    <property type="match status" value="1"/>
</dbReference>
<dbReference type="NCBIfam" id="NF001540">
    <property type="entry name" value="PRK00366.1"/>
    <property type="match status" value="1"/>
</dbReference>
<dbReference type="PANTHER" id="PTHR30454">
    <property type="entry name" value="4-HYDROXY-3-METHYLBUT-2-EN-1-YL DIPHOSPHATE SYNTHASE"/>
    <property type="match status" value="1"/>
</dbReference>
<dbReference type="PANTHER" id="PTHR30454:SF0">
    <property type="entry name" value="4-HYDROXY-3-METHYLBUT-2-EN-1-YL DIPHOSPHATE SYNTHASE (FERREDOXIN), CHLOROPLASTIC"/>
    <property type="match status" value="1"/>
</dbReference>
<dbReference type="Pfam" id="PF04551">
    <property type="entry name" value="GcpE"/>
    <property type="match status" value="1"/>
</dbReference>
<dbReference type="PIRSF" id="PIRSF004640">
    <property type="entry name" value="IspG"/>
    <property type="match status" value="1"/>
</dbReference>
<dbReference type="SUPFAM" id="SSF51604">
    <property type="entry name" value="Enolase C-terminal domain-like"/>
    <property type="match status" value="1"/>
</dbReference>
<dbReference type="SUPFAM" id="SSF56014">
    <property type="entry name" value="Nitrite and sulphite reductase 4Fe-4S domain-like"/>
    <property type="match status" value="1"/>
</dbReference>
<comment type="function">
    <text evidence="1">Converts 2C-methyl-D-erythritol 2,4-cyclodiphosphate (ME-2,4cPP) into 1-hydroxy-2-methyl-2-(E)-butenyl 4-diphosphate.</text>
</comment>
<comment type="catalytic activity">
    <reaction evidence="1">
        <text>(2E)-4-hydroxy-3-methylbut-2-enyl diphosphate + oxidized [flavodoxin] + H2O + 2 H(+) = 2-C-methyl-D-erythritol 2,4-cyclic diphosphate + reduced [flavodoxin]</text>
        <dbReference type="Rhea" id="RHEA:43604"/>
        <dbReference type="Rhea" id="RHEA-COMP:10622"/>
        <dbReference type="Rhea" id="RHEA-COMP:10623"/>
        <dbReference type="ChEBI" id="CHEBI:15377"/>
        <dbReference type="ChEBI" id="CHEBI:15378"/>
        <dbReference type="ChEBI" id="CHEBI:57618"/>
        <dbReference type="ChEBI" id="CHEBI:58210"/>
        <dbReference type="ChEBI" id="CHEBI:58483"/>
        <dbReference type="ChEBI" id="CHEBI:128753"/>
        <dbReference type="EC" id="1.17.7.3"/>
    </reaction>
</comment>
<comment type="cofactor">
    <cofactor evidence="1">
        <name>[4Fe-4S] cluster</name>
        <dbReference type="ChEBI" id="CHEBI:49883"/>
    </cofactor>
    <text evidence="1">Binds 1 [4Fe-4S] cluster.</text>
</comment>
<comment type="pathway">
    <text evidence="1">Isoprenoid biosynthesis; isopentenyl diphosphate biosynthesis via DXP pathway; isopentenyl diphosphate from 1-deoxy-D-xylulose 5-phosphate: step 5/6.</text>
</comment>
<comment type="similarity">
    <text evidence="1">Belongs to the IspG family.</text>
</comment>
<proteinExistence type="inferred from homology"/>
<sequence>MLENRVKTKQIFIGGVAIGGDAPISTQSMTFSKTADIESTKNQIDRLKLAGADLVRVAVSNEKDALALKELKRVSPLPLIADIHFHYKFALIAAQSVDAIRINPGNIGSKDKIKAVVDACKEKNIPIRIGVNAGSLEKQFDQKYGPTPKGMVESALYNAKLLEDLDFTDFKISLKASDVIRTIEAYRMLRPLVIYPFHLGVTEAGNLFSSSIKSAMALGGLLMEGIGDTMRVSITGELENEIKVARAILRHSGRLKEGINLISCPTCGRIEANLVDMASKVEKRLSHIKTPLDISVMGCVVNALGEAKHADMAIAFGNRSGLIIKEGKVIHKLAEKDLFETFVIEVENLAKEREKSLKD</sequence>
<organism>
    <name type="scientific">Helicobacter pylori (strain Shi470)</name>
    <dbReference type="NCBI Taxonomy" id="512562"/>
    <lineage>
        <taxon>Bacteria</taxon>
        <taxon>Pseudomonadati</taxon>
        <taxon>Campylobacterota</taxon>
        <taxon>Epsilonproteobacteria</taxon>
        <taxon>Campylobacterales</taxon>
        <taxon>Helicobacteraceae</taxon>
        <taxon>Helicobacter</taxon>
    </lineage>
</organism>